<proteinExistence type="inferred from homology"/>
<organism>
    <name type="scientific">Helicobacter pylori (strain ATCC 700392 / 26695)</name>
    <name type="common">Campylobacter pylori</name>
    <dbReference type="NCBI Taxonomy" id="85962"/>
    <lineage>
        <taxon>Bacteria</taxon>
        <taxon>Pseudomonadati</taxon>
        <taxon>Campylobacterota</taxon>
        <taxon>Epsilonproteobacteria</taxon>
        <taxon>Campylobacterales</taxon>
        <taxon>Helicobacteraceae</taxon>
        <taxon>Helicobacter</taxon>
    </lineage>
</organism>
<reference key="1">
    <citation type="journal article" date="1997" name="Nature">
        <title>The complete genome sequence of the gastric pathogen Helicobacter pylori.</title>
        <authorList>
            <person name="Tomb J.-F."/>
            <person name="White O."/>
            <person name="Kerlavage A.R."/>
            <person name="Clayton R.A."/>
            <person name="Sutton G.G."/>
            <person name="Fleischmann R.D."/>
            <person name="Ketchum K.A."/>
            <person name="Klenk H.-P."/>
            <person name="Gill S.R."/>
            <person name="Dougherty B.A."/>
            <person name="Nelson K.E."/>
            <person name="Quackenbush J."/>
            <person name="Zhou L."/>
            <person name="Kirkness E.F."/>
            <person name="Peterson S.N."/>
            <person name="Loftus B.J."/>
            <person name="Richardson D.L."/>
            <person name="Dodson R.J."/>
            <person name="Khalak H.G."/>
            <person name="Glodek A."/>
            <person name="McKenney K."/>
            <person name="FitzGerald L.M."/>
            <person name="Lee N."/>
            <person name="Adams M.D."/>
            <person name="Hickey E.K."/>
            <person name="Berg D.E."/>
            <person name="Gocayne J.D."/>
            <person name="Utterback T.R."/>
            <person name="Peterson J.D."/>
            <person name="Kelley J.M."/>
            <person name="Cotton M.D."/>
            <person name="Weidman J.F."/>
            <person name="Fujii C."/>
            <person name="Bowman C."/>
            <person name="Watthey L."/>
            <person name="Wallin E."/>
            <person name="Hayes W.S."/>
            <person name="Borodovsky M."/>
            <person name="Karp P.D."/>
            <person name="Smith H.O."/>
            <person name="Fraser C.M."/>
            <person name="Venter J.C."/>
        </authorList>
    </citation>
    <scope>NUCLEOTIDE SEQUENCE [LARGE SCALE GENOMIC DNA]</scope>
    <source>
        <strain>ATCC 700392 / 26695</strain>
    </source>
</reference>
<protein>
    <recommendedName>
        <fullName>Guanylate kinase</fullName>
        <ecNumber>2.7.4.8</ecNumber>
    </recommendedName>
    <alternativeName>
        <fullName>GMP kinase</fullName>
    </alternativeName>
</protein>
<name>KGUA_HELPY</name>
<keyword id="KW-0067">ATP-binding</keyword>
<keyword id="KW-0963">Cytoplasm</keyword>
<keyword id="KW-0418">Kinase</keyword>
<keyword id="KW-0547">Nucleotide-binding</keyword>
<keyword id="KW-1185">Reference proteome</keyword>
<keyword id="KW-0808">Transferase</keyword>
<gene>
    <name type="primary">gmk</name>
    <name type="ordered locus">HP_0321</name>
</gene>
<feature type="chain" id="PRO_0000170547" description="Guanylate kinase">
    <location>
        <begin position="1"/>
        <end position="206"/>
    </location>
</feature>
<feature type="domain" description="Guanylate kinase-like">
    <location>
        <begin position="5"/>
        <end position="183"/>
    </location>
</feature>
<feature type="binding site" evidence="1">
    <location>
        <begin position="12"/>
        <end position="19"/>
    </location>
    <ligand>
        <name>ATP</name>
        <dbReference type="ChEBI" id="CHEBI:30616"/>
    </ligand>
</feature>
<evidence type="ECO:0000250" key="1"/>
<evidence type="ECO:0000305" key="2"/>
<sequence>MHNDFNLLILSGPSGAGKSTLTKYLQEKIPKTHFSLSTTTRKPREGEVDGLHYNFVSEEEFKQGIEKGQFLEWAIVHNHYYGTSKIPVEKALKEGKIVIFDIDVQGHEILKKHYPNACSVFISTKNQEILKERLLLRGTDSKETIEKRLINAYKEMQCLESFDYLIINEDLEKSKEIILSIAKTLVHRLKAFNFEKICKAWKNETL</sequence>
<dbReference type="EC" id="2.7.4.8"/>
<dbReference type="EMBL" id="AE000511">
    <property type="protein sequence ID" value="AAD07389.1"/>
    <property type="molecule type" value="Genomic_DNA"/>
</dbReference>
<dbReference type="PIR" id="A64560">
    <property type="entry name" value="A64560"/>
</dbReference>
<dbReference type="RefSeq" id="NP_207119.1">
    <property type="nucleotide sequence ID" value="NC_000915.1"/>
</dbReference>
<dbReference type="RefSeq" id="WP_000551230.1">
    <property type="nucleotide sequence ID" value="NC_018939.1"/>
</dbReference>
<dbReference type="SMR" id="P56103"/>
<dbReference type="DIP" id="DIP-3426N"/>
<dbReference type="FunCoup" id="P56103">
    <property type="interactions" value="320"/>
</dbReference>
<dbReference type="IntAct" id="P56103">
    <property type="interactions" value="3"/>
</dbReference>
<dbReference type="MINT" id="P56103"/>
<dbReference type="STRING" id="85962.HP_0321"/>
<dbReference type="PaxDb" id="85962-C694_01625"/>
<dbReference type="EnsemblBacteria" id="AAD07389">
    <property type="protein sequence ID" value="AAD07389"/>
    <property type="gene ID" value="HP_0321"/>
</dbReference>
<dbReference type="KEGG" id="heo:C694_01625"/>
<dbReference type="KEGG" id="hpy:HP_0321"/>
<dbReference type="PATRIC" id="fig|85962.47.peg.343"/>
<dbReference type="eggNOG" id="COG0194">
    <property type="taxonomic scope" value="Bacteria"/>
</dbReference>
<dbReference type="InParanoid" id="P56103"/>
<dbReference type="OrthoDB" id="9808150at2"/>
<dbReference type="PhylomeDB" id="P56103"/>
<dbReference type="Proteomes" id="UP000000429">
    <property type="component" value="Chromosome"/>
</dbReference>
<dbReference type="GO" id="GO:0005829">
    <property type="term" value="C:cytosol"/>
    <property type="evidence" value="ECO:0000318"/>
    <property type="project" value="GO_Central"/>
</dbReference>
<dbReference type="GO" id="GO:0005524">
    <property type="term" value="F:ATP binding"/>
    <property type="evidence" value="ECO:0007669"/>
    <property type="project" value="UniProtKB-UniRule"/>
</dbReference>
<dbReference type="GO" id="GO:0004385">
    <property type="term" value="F:guanylate kinase activity"/>
    <property type="evidence" value="ECO:0000318"/>
    <property type="project" value="GO_Central"/>
</dbReference>
<dbReference type="CDD" id="cd00071">
    <property type="entry name" value="GMPK"/>
    <property type="match status" value="1"/>
</dbReference>
<dbReference type="FunFam" id="3.30.63.10:FF:000002">
    <property type="entry name" value="Guanylate kinase 1"/>
    <property type="match status" value="1"/>
</dbReference>
<dbReference type="Gene3D" id="3.30.63.10">
    <property type="entry name" value="Guanylate Kinase phosphate binding domain"/>
    <property type="match status" value="1"/>
</dbReference>
<dbReference type="Gene3D" id="3.40.50.300">
    <property type="entry name" value="P-loop containing nucleotide triphosphate hydrolases"/>
    <property type="match status" value="1"/>
</dbReference>
<dbReference type="HAMAP" id="MF_00328">
    <property type="entry name" value="Guanylate_kinase"/>
    <property type="match status" value="1"/>
</dbReference>
<dbReference type="InterPro" id="IPR008145">
    <property type="entry name" value="GK/Ca_channel_bsu"/>
</dbReference>
<dbReference type="InterPro" id="IPR008144">
    <property type="entry name" value="Guanylate_kin-like_dom"/>
</dbReference>
<dbReference type="InterPro" id="IPR017665">
    <property type="entry name" value="Guanylate_kinase"/>
</dbReference>
<dbReference type="InterPro" id="IPR020590">
    <property type="entry name" value="Guanylate_kinase_CS"/>
</dbReference>
<dbReference type="InterPro" id="IPR027417">
    <property type="entry name" value="P-loop_NTPase"/>
</dbReference>
<dbReference type="NCBIfam" id="TIGR03263">
    <property type="entry name" value="guanyl_kin"/>
    <property type="match status" value="1"/>
</dbReference>
<dbReference type="PANTHER" id="PTHR23117:SF13">
    <property type="entry name" value="GUANYLATE KINASE"/>
    <property type="match status" value="1"/>
</dbReference>
<dbReference type="PANTHER" id="PTHR23117">
    <property type="entry name" value="GUANYLATE KINASE-RELATED"/>
    <property type="match status" value="1"/>
</dbReference>
<dbReference type="Pfam" id="PF00625">
    <property type="entry name" value="Guanylate_kin"/>
    <property type="match status" value="1"/>
</dbReference>
<dbReference type="SMART" id="SM00072">
    <property type="entry name" value="GuKc"/>
    <property type="match status" value="1"/>
</dbReference>
<dbReference type="SUPFAM" id="SSF52540">
    <property type="entry name" value="P-loop containing nucleoside triphosphate hydrolases"/>
    <property type="match status" value="1"/>
</dbReference>
<dbReference type="PROSITE" id="PS00856">
    <property type="entry name" value="GUANYLATE_KINASE_1"/>
    <property type="match status" value="1"/>
</dbReference>
<dbReference type="PROSITE" id="PS50052">
    <property type="entry name" value="GUANYLATE_KINASE_2"/>
    <property type="match status" value="1"/>
</dbReference>
<comment type="function">
    <text evidence="1">Essential for recycling GMP and indirectly, cGMP.</text>
</comment>
<comment type="catalytic activity">
    <reaction>
        <text>GMP + ATP = GDP + ADP</text>
        <dbReference type="Rhea" id="RHEA:20780"/>
        <dbReference type="ChEBI" id="CHEBI:30616"/>
        <dbReference type="ChEBI" id="CHEBI:58115"/>
        <dbReference type="ChEBI" id="CHEBI:58189"/>
        <dbReference type="ChEBI" id="CHEBI:456216"/>
        <dbReference type="EC" id="2.7.4.8"/>
    </reaction>
</comment>
<comment type="subcellular location">
    <subcellularLocation>
        <location evidence="1">Cytoplasm</location>
    </subcellularLocation>
</comment>
<comment type="similarity">
    <text evidence="2">Belongs to the guanylate kinase family.</text>
</comment>
<accession>P56103</accession>